<proteinExistence type="inferred from homology"/>
<protein>
    <recommendedName>
        <fullName evidence="1">UDP-3-O-acyl-N-acetylglucosamine deacetylase</fullName>
        <shortName evidence="1">UDP-3-O-acyl-GlcNAc deacetylase</shortName>
        <ecNumber evidence="1">3.5.1.108</ecNumber>
    </recommendedName>
    <alternativeName>
        <fullName evidence="1">UDP-3-O-[R-3-hydroxymyristoyl]-N-acetylglucosamine deacetylase</fullName>
    </alternativeName>
</protein>
<reference key="1">
    <citation type="journal article" date="2010" name="Genome Biol. Evol.">
        <title>Continuing evolution of Burkholderia mallei through genome reduction and large-scale rearrangements.</title>
        <authorList>
            <person name="Losada L."/>
            <person name="Ronning C.M."/>
            <person name="DeShazer D."/>
            <person name="Woods D."/>
            <person name="Fedorova N."/>
            <person name="Kim H.S."/>
            <person name="Shabalina S.A."/>
            <person name="Pearson T.R."/>
            <person name="Brinkac L."/>
            <person name="Tan P."/>
            <person name="Nandi T."/>
            <person name="Crabtree J."/>
            <person name="Badger J."/>
            <person name="Beckstrom-Sternberg S."/>
            <person name="Saqib M."/>
            <person name="Schutzer S.E."/>
            <person name="Keim P."/>
            <person name="Nierman W.C."/>
        </authorList>
    </citation>
    <scope>NUCLEOTIDE SEQUENCE [LARGE SCALE GENOMIC DNA]</scope>
    <source>
        <strain>NCTC 10247</strain>
    </source>
</reference>
<comment type="function">
    <text evidence="1">Catalyzes the hydrolysis of UDP-3-O-myristoyl-N-acetylglucosamine to form UDP-3-O-myristoylglucosamine and acetate, the committed step in lipid A biosynthesis.</text>
</comment>
<comment type="catalytic activity">
    <reaction evidence="1">
        <text>a UDP-3-O-[(3R)-3-hydroxyacyl]-N-acetyl-alpha-D-glucosamine + H2O = a UDP-3-O-[(3R)-3-hydroxyacyl]-alpha-D-glucosamine + acetate</text>
        <dbReference type="Rhea" id="RHEA:67816"/>
        <dbReference type="ChEBI" id="CHEBI:15377"/>
        <dbReference type="ChEBI" id="CHEBI:30089"/>
        <dbReference type="ChEBI" id="CHEBI:137740"/>
        <dbReference type="ChEBI" id="CHEBI:173225"/>
        <dbReference type="EC" id="3.5.1.108"/>
    </reaction>
</comment>
<comment type="cofactor">
    <cofactor evidence="1">
        <name>Zn(2+)</name>
        <dbReference type="ChEBI" id="CHEBI:29105"/>
    </cofactor>
</comment>
<comment type="pathway">
    <text evidence="1">Glycolipid biosynthesis; lipid IV(A) biosynthesis; lipid IV(A) from (3R)-3-hydroxytetradecanoyl-[acyl-carrier-protein] and UDP-N-acetyl-alpha-D-glucosamine: step 2/6.</text>
</comment>
<comment type="similarity">
    <text evidence="1">Belongs to the LpxC family.</text>
</comment>
<evidence type="ECO:0000255" key="1">
    <source>
        <dbReference type="HAMAP-Rule" id="MF_00388"/>
    </source>
</evidence>
<accession>A3MR71</accession>
<keyword id="KW-0378">Hydrolase</keyword>
<keyword id="KW-0441">Lipid A biosynthesis</keyword>
<keyword id="KW-0444">Lipid biosynthesis</keyword>
<keyword id="KW-0443">Lipid metabolism</keyword>
<keyword id="KW-0479">Metal-binding</keyword>
<keyword id="KW-0862">Zinc</keyword>
<feature type="chain" id="PRO_1000013192" description="UDP-3-O-acyl-N-acetylglucosamine deacetylase">
    <location>
        <begin position="1"/>
        <end position="305"/>
    </location>
</feature>
<feature type="active site" description="Proton donor" evidence="1">
    <location>
        <position position="264"/>
    </location>
</feature>
<feature type="binding site" evidence="1">
    <location>
        <position position="78"/>
    </location>
    <ligand>
        <name>Zn(2+)</name>
        <dbReference type="ChEBI" id="CHEBI:29105"/>
    </ligand>
</feature>
<feature type="binding site" evidence="1">
    <location>
        <position position="237"/>
    </location>
    <ligand>
        <name>Zn(2+)</name>
        <dbReference type="ChEBI" id="CHEBI:29105"/>
    </ligand>
</feature>
<feature type="binding site" evidence="1">
    <location>
        <position position="241"/>
    </location>
    <ligand>
        <name>Zn(2+)</name>
        <dbReference type="ChEBI" id="CHEBI:29105"/>
    </ligand>
</feature>
<sequence length="305" mass="33526">MLKQRTIKSIVKTVGIGVHSGRKVELTLRPAAPDTGIVFSRVDLPTPVDIPASALSIGDTRLASVLQKDGVRVSTVEHLMSACAGLGIDNLYVDVTAEEIPIMDGSAATFVFLIQSAGIEEQNAAKKFIKVTKPVEIRDGDKFARLDPYFGFKLKFTIDFRHPAVDKTGQELEVDFANTSYVREIARARTFGFAHEVEMMRELGLARGGSMDNAIVLDEYRILNNDGLRYDDEFVKHKMLDAIGDLYVIGHPLLASYTAYKSGHGLNNALLRELLAHEQAYEIVTFDDPKTAPTGFGFDAQTAFA</sequence>
<organism>
    <name type="scientific">Burkholderia mallei (strain NCTC 10247)</name>
    <dbReference type="NCBI Taxonomy" id="320389"/>
    <lineage>
        <taxon>Bacteria</taxon>
        <taxon>Pseudomonadati</taxon>
        <taxon>Pseudomonadota</taxon>
        <taxon>Betaproteobacteria</taxon>
        <taxon>Burkholderiales</taxon>
        <taxon>Burkholderiaceae</taxon>
        <taxon>Burkholderia</taxon>
        <taxon>pseudomallei group</taxon>
    </lineage>
</organism>
<name>LPXC_BURM7</name>
<dbReference type="EC" id="3.5.1.108" evidence="1"/>
<dbReference type="EMBL" id="CP000548">
    <property type="protein sequence ID" value="ABO06573.1"/>
    <property type="molecule type" value="Genomic_DNA"/>
</dbReference>
<dbReference type="RefSeq" id="WP_004194158.1">
    <property type="nucleotide sequence ID" value="NZ_CP007802.1"/>
</dbReference>
<dbReference type="SMR" id="A3MR71"/>
<dbReference type="GeneID" id="93061620"/>
<dbReference type="KEGG" id="bmaz:BM44_130"/>
<dbReference type="KEGG" id="bmn:BMA10247_3240"/>
<dbReference type="PATRIC" id="fig|320389.8.peg.138"/>
<dbReference type="UniPathway" id="UPA00359">
    <property type="reaction ID" value="UER00478"/>
</dbReference>
<dbReference type="GO" id="GO:0016020">
    <property type="term" value="C:membrane"/>
    <property type="evidence" value="ECO:0007669"/>
    <property type="project" value="GOC"/>
</dbReference>
<dbReference type="GO" id="GO:0046872">
    <property type="term" value="F:metal ion binding"/>
    <property type="evidence" value="ECO:0007669"/>
    <property type="project" value="UniProtKB-KW"/>
</dbReference>
<dbReference type="GO" id="GO:0103117">
    <property type="term" value="F:UDP-3-O-acyl-N-acetylglucosamine deacetylase activity"/>
    <property type="evidence" value="ECO:0007669"/>
    <property type="project" value="UniProtKB-UniRule"/>
</dbReference>
<dbReference type="GO" id="GO:0009245">
    <property type="term" value="P:lipid A biosynthetic process"/>
    <property type="evidence" value="ECO:0007669"/>
    <property type="project" value="UniProtKB-UniRule"/>
</dbReference>
<dbReference type="Gene3D" id="3.30.230.20">
    <property type="entry name" value="lpxc deacetylase, domain 1"/>
    <property type="match status" value="1"/>
</dbReference>
<dbReference type="Gene3D" id="3.30.1700.10">
    <property type="entry name" value="lpxc deacetylase, domain 2"/>
    <property type="match status" value="1"/>
</dbReference>
<dbReference type="HAMAP" id="MF_00388">
    <property type="entry name" value="LpxC"/>
    <property type="match status" value="1"/>
</dbReference>
<dbReference type="InterPro" id="IPR020568">
    <property type="entry name" value="Ribosomal_Su5_D2-typ_SF"/>
</dbReference>
<dbReference type="InterPro" id="IPR004463">
    <property type="entry name" value="UDP-acyl_GlcNac_deAcase"/>
</dbReference>
<dbReference type="InterPro" id="IPR011334">
    <property type="entry name" value="UDP-acyl_GlcNac_deAcase_C"/>
</dbReference>
<dbReference type="InterPro" id="IPR015870">
    <property type="entry name" value="UDP-acyl_N-AcGlcN_deAcase_N"/>
</dbReference>
<dbReference type="NCBIfam" id="TIGR00325">
    <property type="entry name" value="lpxC"/>
    <property type="match status" value="1"/>
</dbReference>
<dbReference type="PANTHER" id="PTHR33694">
    <property type="entry name" value="UDP-3-O-ACYL-N-ACETYLGLUCOSAMINE DEACETYLASE 1, MITOCHONDRIAL-RELATED"/>
    <property type="match status" value="1"/>
</dbReference>
<dbReference type="PANTHER" id="PTHR33694:SF1">
    <property type="entry name" value="UDP-3-O-ACYL-N-ACETYLGLUCOSAMINE DEACETYLASE 1, MITOCHONDRIAL-RELATED"/>
    <property type="match status" value="1"/>
</dbReference>
<dbReference type="Pfam" id="PF03331">
    <property type="entry name" value="LpxC"/>
    <property type="match status" value="1"/>
</dbReference>
<dbReference type="SUPFAM" id="SSF54211">
    <property type="entry name" value="Ribosomal protein S5 domain 2-like"/>
    <property type="match status" value="2"/>
</dbReference>
<gene>
    <name evidence="1" type="primary">lpxC</name>
    <name type="ordered locus">BMA10247_3240</name>
</gene>